<name>YEEI_BACSU</name>
<organism>
    <name type="scientific">Bacillus subtilis (strain 168)</name>
    <dbReference type="NCBI Taxonomy" id="224308"/>
    <lineage>
        <taxon>Bacteria</taxon>
        <taxon>Bacillati</taxon>
        <taxon>Bacillota</taxon>
        <taxon>Bacilli</taxon>
        <taxon>Bacillales</taxon>
        <taxon>Bacillaceae</taxon>
        <taxon>Bacillus</taxon>
    </lineage>
</organism>
<accession>O31509</accession>
<keyword id="KW-0963">Cytoplasm</keyword>
<keyword id="KW-0238">DNA-binding</keyword>
<keyword id="KW-1185">Reference proteome</keyword>
<keyword id="KW-0804">Transcription</keyword>
<keyword id="KW-0805">Transcription regulation</keyword>
<sequence length="239" mass="26313">MGRKWNNIKEKKASKDANTSRIYAKFGREIYVAAKQGEPDPESNQALKVVLERAKTYSVPKNIIERAIEKAKGGAEENYDELRYEGFGPNGSMIIVDALTNNVNRTAPEVRAAFGKNGGNMGVSGSVAYMFDATAVIGVEGKTADEALEILMEADVDVRDILEEDDSAIVYAEPDQFHAVQEAFKNAGVEEFTVAELTMLAQSEVTLPDDAKEQFEKLIDALEDLEDVQQVYHNVDLGE</sequence>
<evidence type="ECO:0000255" key="1">
    <source>
        <dbReference type="HAMAP-Rule" id="MF_00918"/>
    </source>
</evidence>
<gene>
    <name type="primary">yeeI</name>
    <name type="ordered locus">BSU06840</name>
</gene>
<reference key="1">
    <citation type="journal article" date="1997" name="Nature">
        <title>The complete genome sequence of the Gram-positive bacterium Bacillus subtilis.</title>
        <authorList>
            <person name="Kunst F."/>
            <person name="Ogasawara N."/>
            <person name="Moszer I."/>
            <person name="Albertini A.M."/>
            <person name="Alloni G."/>
            <person name="Azevedo V."/>
            <person name="Bertero M.G."/>
            <person name="Bessieres P."/>
            <person name="Bolotin A."/>
            <person name="Borchert S."/>
            <person name="Borriss R."/>
            <person name="Boursier L."/>
            <person name="Brans A."/>
            <person name="Braun M."/>
            <person name="Brignell S.C."/>
            <person name="Bron S."/>
            <person name="Brouillet S."/>
            <person name="Bruschi C.V."/>
            <person name="Caldwell B."/>
            <person name="Capuano V."/>
            <person name="Carter N.M."/>
            <person name="Choi S.-K."/>
            <person name="Codani J.-J."/>
            <person name="Connerton I.F."/>
            <person name="Cummings N.J."/>
            <person name="Daniel R.A."/>
            <person name="Denizot F."/>
            <person name="Devine K.M."/>
            <person name="Duesterhoeft A."/>
            <person name="Ehrlich S.D."/>
            <person name="Emmerson P.T."/>
            <person name="Entian K.-D."/>
            <person name="Errington J."/>
            <person name="Fabret C."/>
            <person name="Ferrari E."/>
            <person name="Foulger D."/>
            <person name="Fritz C."/>
            <person name="Fujita M."/>
            <person name="Fujita Y."/>
            <person name="Fuma S."/>
            <person name="Galizzi A."/>
            <person name="Galleron N."/>
            <person name="Ghim S.-Y."/>
            <person name="Glaser P."/>
            <person name="Goffeau A."/>
            <person name="Golightly E.J."/>
            <person name="Grandi G."/>
            <person name="Guiseppi G."/>
            <person name="Guy B.J."/>
            <person name="Haga K."/>
            <person name="Haiech J."/>
            <person name="Harwood C.R."/>
            <person name="Henaut A."/>
            <person name="Hilbert H."/>
            <person name="Holsappel S."/>
            <person name="Hosono S."/>
            <person name="Hullo M.-F."/>
            <person name="Itaya M."/>
            <person name="Jones L.-M."/>
            <person name="Joris B."/>
            <person name="Karamata D."/>
            <person name="Kasahara Y."/>
            <person name="Klaerr-Blanchard M."/>
            <person name="Klein C."/>
            <person name="Kobayashi Y."/>
            <person name="Koetter P."/>
            <person name="Koningstein G."/>
            <person name="Krogh S."/>
            <person name="Kumano M."/>
            <person name="Kurita K."/>
            <person name="Lapidus A."/>
            <person name="Lardinois S."/>
            <person name="Lauber J."/>
            <person name="Lazarevic V."/>
            <person name="Lee S.-M."/>
            <person name="Levine A."/>
            <person name="Liu H."/>
            <person name="Masuda S."/>
            <person name="Mauel C."/>
            <person name="Medigue C."/>
            <person name="Medina N."/>
            <person name="Mellado R.P."/>
            <person name="Mizuno M."/>
            <person name="Moestl D."/>
            <person name="Nakai S."/>
            <person name="Noback M."/>
            <person name="Noone D."/>
            <person name="O'Reilly M."/>
            <person name="Ogawa K."/>
            <person name="Ogiwara A."/>
            <person name="Oudega B."/>
            <person name="Park S.-H."/>
            <person name="Parro V."/>
            <person name="Pohl T.M."/>
            <person name="Portetelle D."/>
            <person name="Porwollik S."/>
            <person name="Prescott A.M."/>
            <person name="Presecan E."/>
            <person name="Pujic P."/>
            <person name="Purnelle B."/>
            <person name="Rapoport G."/>
            <person name="Rey M."/>
            <person name="Reynolds S."/>
            <person name="Rieger M."/>
            <person name="Rivolta C."/>
            <person name="Rocha E."/>
            <person name="Roche B."/>
            <person name="Rose M."/>
            <person name="Sadaie Y."/>
            <person name="Sato T."/>
            <person name="Scanlan E."/>
            <person name="Schleich S."/>
            <person name="Schroeter R."/>
            <person name="Scoffone F."/>
            <person name="Sekiguchi J."/>
            <person name="Sekowska A."/>
            <person name="Seror S.J."/>
            <person name="Serror P."/>
            <person name="Shin B.-S."/>
            <person name="Soldo B."/>
            <person name="Sorokin A."/>
            <person name="Tacconi E."/>
            <person name="Takagi T."/>
            <person name="Takahashi H."/>
            <person name="Takemaru K."/>
            <person name="Takeuchi M."/>
            <person name="Tamakoshi A."/>
            <person name="Tanaka T."/>
            <person name="Terpstra P."/>
            <person name="Tognoni A."/>
            <person name="Tosato V."/>
            <person name="Uchiyama S."/>
            <person name="Vandenbol M."/>
            <person name="Vannier F."/>
            <person name="Vassarotti A."/>
            <person name="Viari A."/>
            <person name="Wambutt R."/>
            <person name="Wedler E."/>
            <person name="Wedler H."/>
            <person name="Weitzenegger T."/>
            <person name="Winters P."/>
            <person name="Wipat A."/>
            <person name="Yamamoto H."/>
            <person name="Yamane K."/>
            <person name="Yasumoto K."/>
            <person name="Yata K."/>
            <person name="Yoshida K."/>
            <person name="Yoshikawa H.-F."/>
            <person name="Zumstein E."/>
            <person name="Yoshikawa H."/>
            <person name="Danchin A."/>
        </authorList>
    </citation>
    <scope>NUCLEOTIDE SEQUENCE [LARGE SCALE GENOMIC DNA]</scope>
    <source>
        <strain>168</strain>
    </source>
</reference>
<reference key="2">
    <citation type="journal article" date="1999" name="Genome Res.">
        <title>Detecting and analyzing DNA sequencing errors: toward a higher quality of the Bacillus subtilis genome sequence.</title>
        <authorList>
            <person name="Medigue C."/>
            <person name="Rose M."/>
            <person name="Viari A."/>
            <person name="Danchin A."/>
        </authorList>
    </citation>
    <scope>SEQUENCE REVISION</scope>
</reference>
<reference key="3">
    <citation type="journal article" date="2009" name="Microbiology">
        <title>From a consortium sequence to a unified sequence: the Bacillus subtilis 168 reference genome a decade later.</title>
        <authorList>
            <person name="Barbe V."/>
            <person name="Cruveiller S."/>
            <person name="Kunst F."/>
            <person name="Lenoble P."/>
            <person name="Meurice G."/>
            <person name="Sekowska A."/>
            <person name="Vallenet D."/>
            <person name="Wang T."/>
            <person name="Moszer I."/>
            <person name="Medigue C."/>
            <person name="Danchin A."/>
        </authorList>
    </citation>
    <scope>SEQUENCE REVISION TO 138 AND 198</scope>
</reference>
<protein>
    <recommendedName>
        <fullName evidence="1">Probable transcriptional regulatory protein YeeI</fullName>
    </recommendedName>
</protein>
<feature type="chain" id="PRO_0000175762" description="Probable transcriptional regulatory protein YeeI">
    <location>
        <begin position="1"/>
        <end position="239"/>
    </location>
</feature>
<dbReference type="EMBL" id="AL009126">
    <property type="protein sequence ID" value="CAB12504.3"/>
    <property type="molecule type" value="Genomic_DNA"/>
</dbReference>
<dbReference type="PIR" id="C69793">
    <property type="entry name" value="C69793"/>
</dbReference>
<dbReference type="RefSeq" id="NP_388566.3">
    <property type="nucleotide sequence ID" value="NC_000964.3"/>
</dbReference>
<dbReference type="RefSeq" id="WP_003242611.1">
    <property type="nucleotide sequence ID" value="NZ_OZ025638.1"/>
</dbReference>
<dbReference type="SMR" id="O31509"/>
<dbReference type="FunCoup" id="O31509">
    <property type="interactions" value="415"/>
</dbReference>
<dbReference type="STRING" id="224308.BSU06840"/>
<dbReference type="jPOST" id="O31509"/>
<dbReference type="PaxDb" id="224308-BSU06840"/>
<dbReference type="EnsemblBacteria" id="CAB12504">
    <property type="protein sequence ID" value="CAB12504"/>
    <property type="gene ID" value="BSU_06840"/>
</dbReference>
<dbReference type="GeneID" id="938749"/>
<dbReference type="KEGG" id="bsu:BSU06840"/>
<dbReference type="PATRIC" id="fig|224308.179.peg.744"/>
<dbReference type="eggNOG" id="COG0217">
    <property type="taxonomic scope" value="Bacteria"/>
</dbReference>
<dbReference type="InParanoid" id="O31509"/>
<dbReference type="OrthoDB" id="9781053at2"/>
<dbReference type="PhylomeDB" id="O31509"/>
<dbReference type="BioCyc" id="BSUB:BSU06840-MONOMER"/>
<dbReference type="Proteomes" id="UP000001570">
    <property type="component" value="Chromosome"/>
</dbReference>
<dbReference type="GO" id="GO:0005829">
    <property type="term" value="C:cytosol"/>
    <property type="evidence" value="ECO:0000318"/>
    <property type="project" value="GO_Central"/>
</dbReference>
<dbReference type="GO" id="GO:0003677">
    <property type="term" value="F:DNA binding"/>
    <property type="evidence" value="ECO:0007669"/>
    <property type="project" value="UniProtKB-UniRule"/>
</dbReference>
<dbReference type="GO" id="GO:0006355">
    <property type="term" value="P:regulation of DNA-templated transcription"/>
    <property type="evidence" value="ECO:0007669"/>
    <property type="project" value="UniProtKB-UniRule"/>
</dbReference>
<dbReference type="FunFam" id="1.10.10.200:FF:000003">
    <property type="entry name" value="Probable transcriptional regulatory protein YeeN"/>
    <property type="match status" value="1"/>
</dbReference>
<dbReference type="FunFam" id="3.30.70.980:FF:000004">
    <property type="entry name" value="Probable transcriptional regulatory protein YeeN"/>
    <property type="match status" value="1"/>
</dbReference>
<dbReference type="Gene3D" id="1.10.10.200">
    <property type="match status" value="1"/>
</dbReference>
<dbReference type="Gene3D" id="3.30.70.980">
    <property type="match status" value="2"/>
</dbReference>
<dbReference type="HAMAP" id="MF_00693">
    <property type="entry name" value="Transcrip_reg_TACO1"/>
    <property type="match status" value="1"/>
</dbReference>
<dbReference type="HAMAP" id="MF_00918">
    <property type="entry name" value="Transcrip_reg_TACO1_YeeN"/>
    <property type="match status" value="1"/>
</dbReference>
<dbReference type="InterPro" id="IPR017856">
    <property type="entry name" value="Integrase-like_N"/>
</dbReference>
<dbReference type="InterPro" id="IPR048300">
    <property type="entry name" value="TACO1_YebC-like_2nd/3rd_dom"/>
</dbReference>
<dbReference type="InterPro" id="IPR049083">
    <property type="entry name" value="TACO1_YebC_N"/>
</dbReference>
<dbReference type="InterPro" id="IPR002876">
    <property type="entry name" value="Transcrip_reg_TACO1-like"/>
</dbReference>
<dbReference type="InterPro" id="IPR026564">
    <property type="entry name" value="Transcrip_reg_TACO1-like_dom3"/>
</dbReference>
<dbReference type="InterPro" id="IPR026562">
    <property type="entry name" value="Transcrip_reg_TACO1_YeeN"/>
</dbReference>
<dbReference type="InterPro" id="IPR029072">
    <property type="entry name" value="YebC-like"/>
</dbReference>
<dbReference type="NCBIfam" id="NF001030">
    <property type="entry name" value="PRK00110.1"/>
    <property type="match status" value="1"/>
</dbReference>
<dbReference type="NCBIfam" id="NF009044">
    <property type="entry name" value="PRK12378.1"/>
    <property type="match status" value="1"/>
</dbReference>
<dbReference type="NCBIfam" id="TIGR01033">
    <property type="entry name" value="YebC/PmpR family DNA-binding transcriptional regulator"/>
    <property type="match status" value="1"/>
</dbReference>
<dbReference type="PANTHER" id="PTHR12532">
    <property type="entry name" value="TRANSLATIONAL ACTIVATOR OF CYTOCHROME C OXIDASE 1"/>
    <property type="match status" value="1"/>
</dbReference>
<dbReference type="PANTHER" id="PTHR12532:SF0">
    <property type="entry name" value="TRANSLATIONAL ACTIVATOR OF CYTOCHROME C OXIDASE 1"/>
    <property type="match status" value="1"/>
</dbReference>
<dbReference type="Pfam" id="PF20772">
    <property type="entry name" value="TACO1_YebC_N"/>
    <property type="match status" value="1"/>
</dbReference>
<dbReference type="Pfam" id="PF01709">
    <property type="entry name" value="Transcrip_reg"/>
    <property type="match status" value="1"/>
</dbReference>
<dbReference type="SUPFAM" id="SSF75625">
    <property type="entry name" value="YebC-like"/>
    <property type="match status" value="1"/>
</dbReference>
<comment type="subcellular location">
    <subcellularLocation>
        <location evidence="1">Cytoplasm</location>
    </subcellularLocation>
</comment>
<comment type="similarity">
    <text evidence="1">Belongs to the TACO1 family. YeeN subfamily.</text>
</comment>
<proteinExistence type="inferred from homology"/>